<accession>P52996</accession>
<evidence type="ECO:0000255" key="1">
    <source>
        <dbReference type="HAMAP-Rule" id="MF_00156"/>
    </source>
</evidence>
<organism>
    <name type="scientific">Bacillus subtilis (strain 168)</name>
    <dbReference type="NCBI Taxonomy" id="224308"/>
    <lineage>
        <taxon>Bacteria</taxon>
        <taxon>Bacillati</taxon>
        <taxon>Bacillota</taxon>
        <taxon>Bacilli</taxon>
        <taxon>Bacillales</taxon>
        <taxon>Bacillaceae</taxon>
        <taxon>Bacillus</taxon>
    </lineage>
</organism>
<comment type="function">
    <text evidence="1">Catalyzes the reversible reaction in which hydroxymethyl group from 5,10-methylenetetrahydrofolate is transferred onto alpha-ketoisovalerate to form ketopantoate.</text>
</comment>
<comment type="catalytic activity">
    <reaction evidence="1">
        <text>3-methyl-2-oxobutanoate + (6R)-5,10-methylene-5,6,7,8-tetrahydrofolate + H2O = 2-dehydropantoate + (6S)-5,6,7,8-tetrahydrofolate</text>
        <dbReference type="Rhea" id="RHEA:11824"/>
        <dbReference type="ChEBI" id="CHEBI:11561"/>
        <dbReference type="ChEBI" id="CHEBI:11851"/>
        <dbReference type="ChEBI" id="CHEBI:15377"/>
        <dbReference type="ChEBI" id="CHEBI:15636"/>
        <dbReference type="ChEBI" id="CHEBI:57453"/>
        <dbReference type="EC" id="2.1.2.11"/>
    </reaction>
</comment>
<comment type="cofactor">
    <cofactor evidence="1">
        <name>Mg(2+)</name>
        <dbReference type="ChEBI" id="CHEBI:18420"/>
    </cofactor>
    <text evidence="1">Binds 1 Mg(2+) ion per subunit.</text>
</comment>
<comment type="pathway">
    <text evidence="1">Cofactor biosynthesis; (R)-pantothenate biosynthesis; (R)-pantoate from 3-methyl-2-oxobutanoate: step 1/2.</text>
</comment>
<comment type="subunit">
    <text evidence="1">Homodecamer; pentamer of dimers.</text>
</comment>
<comment type="subcellular location">
    <subcellularLocation>
        <location evidence="1">Cytoplasm</location>
    </subcellularLocation>
</comment>
<comment type="similarity">
    <text evidence="1">Belongs to the PanB family.</text>
</comment>
<protein>
    <recommendedName>
        <fullName evidence="1">3-methyl-2-oxobutanoate hydroxymethyltransferase</fullName>
        <ecNumber evidence="1">2.1.2.11</ecNumber>
    </recommendedName>
    <alternativeName>
        <fullName evidence="1">Ketopantoate hydroxymethyltransferase</fullName>
        <shortName evidence="1">KPHMT</shortName>
    </alternativeName>
</protein>
<proteinExistence type="inferred from homology"/>
<reference key="1">
    <citation type="journal article" date="1996" name="Microbiology">
        <title>Sequence analysis of the Bacillus subtilis chromosome region between the serA and kdg loci cloned in a yeast artificial chromosome.</title>
        <authorList>
            <person name="Sorokin A.V."/>
            <person name="Azevedo V."/>
            <person name="Zumstein E."/>
            <person name="Galleron N."/>
            <person name="Ehrlich S.D."/>
            <person name="Serror P."/>
        </authorList>
    </citation>
    <scope>NUCLEOTIDE SEQUENCE [GENOMIC DNA]</scope>
    <source>
        <strain>168 / Marburg / ATCC 6051 / DSM 10 / JCM 1465 / NBRC 13719 / NCIMB 3610 / NRRL NRS-744 / VKM B-501</strain>
    </source>
</reference>
<reference key="2">
    <citation type="journal article" date="1997" name="Nature">
        <title>The complete genome sequence of the Gram-positive bacterium Bacillus subtilis.</title>
        <authorList>
            <person name="Kunst F."/>
            <person name="Ogasawara N."/>
            <person name="Moszer I."/>
            <person name="Albertini A.M."/>
            <person name="Alloni G."/>
            <person name="Azevedo V."/>
            <person name="Bertero M.G."/>
            <person name="Bessieres P."/>
            <person name="Bolotin A."/>
            <person name="Borchert S."/>
            <person name="Borriss R."/>
            <person name="Boursier L."/>
            <person name="Brans A."/>
            <person name="Braun M."/>
            <person name="Brignell S.C."/>
            <person name="Bron S."/>
            <person name="Brouillet S."/>
            <person name="Bruschi C.V."/>
            <person name="Caldwell B."/>
            <person name="Capuano V."/>
            <person name="Carter N.M."/>
            <person name="Choi S.-K."/>
            <person name="Codani J.-J."/>
            <person name="Connerton I.F."/>
            <person name="Cummings N.J."/>
            <person name="Daniel R.A."/>
            <person name="Denizot F."/>
            <person name="Devine K.M."/>
            <person name="Duesterhoeft A."/>
            <person name="Ehrlich S.D."/>
            <person name="Emmerson P.T."/>
            <person name="Entian K.-D."/>
            <person name="Errington J."/>
            <person name="Fabret C."/>
            <person name="Ferrari E."/>
            <person name="Foulger D."/>
            <person name="Fritz C."/>
            <person name="Fujita M."/>
            <person name="Fujita Y."/>
            <person name="Fuma S."/>
            <person name="Galizzi A."/>
            <person name="Galleron N."/>
            <person name="Ghim S.-Y."/>
            <person name="Glaser P."/>
            <person name="Goffeau A."/>
            <person name="Golightly E.J."/>
            <person name="Grandi G."/>
            <person name="Guiseppi G."/>
            <person name="Guy B.J."/>
            <person name="Haga K."/>
            <person name="Haiech J."/>
            <person name="Harwood C.R."/>
            <person name="Henaut A."/>
            <person name="Hilbert H."/>
            <person name="Holsappel S."/>
            <person name="Hosono S."/>
            <person name="Hullo M.-F."/>
            <person name="Itaya M."/>
            <person name="Jones L.-M."/>
            <person name="Joris B."/>
            <person name="Karamata D."/>
            <person name="Kasahara Y."/>
            <person name="Klaerr-Blanchard M."/>
            <person name="Klein C."/>
            <person name="Kobayashi Y."/>
            <person name="Koetter P."/>
            <person name="Koningstein G."/>
            <person name="Krogh S."/>
            <person name="Kumano M."/>
            <person name="Kurita K."/>
            <person name="Lapidus A."/>
            <person name="Lardinois S."/>
            <person name="Lauber J."/>
            <person name="Lazarevic V."/>
            <person name="Lee S.-M."/>
            <person name="Levine A."/>
            <person name="Liu H."/>
            <person name="Masuda S."/>
            <person name="Mauel C."/>
            <person name="Medigue C."/>
            <person name="Medina N."/>
            <person name="Mellado R.P."/>
            <person name="Mizuno M."/>
            <person name="Moestl D."/>
            <person name="Nakai S."/>
            <person name="Noback M."/>
            <person name="Noone D."/>
            <person name="O'Reilly M."/>
            <person name="Ogawa K."/>
            <person name="Ogiwara A."/>
            <person name="Oudega B."/>
            <person name="Park S.-H."/>
            <person name="Parro V."/>
            <person name="Pohl T.M."/>
            <person name="Portetelle D."/>
            <person name="Porwollik S."/>
            <person name="Prescott A.M."/>
            <person name="Presecan E."/>
            <person name="Pujic P."/>
            <person name="Purnelle B."/>
            <person name="Rapoport G."/>
            <person name="Rey M."/>
            <person name="Reynolds S."/>
            <person name="Rieger M."/>
            <person name="Rivolta C."/>
            <person name="Rocha E."/>
            <person name="Roche B."/>
            <person name="Rose M."/>
            <person name="Sadaie Y."/>
            <person name="Sato T."/>
            <person name="Scanlan E."/>
            <person name="Schleich S."/>
            <person name="Schroeter R."/>
            <person name="Scoffone F."/>
            <person name="Sekiguchi J."/>
            <person name="Sekowska A."/>
            <person name="Seror S.J."/>
            <person name="Serror P."/>
            <person name="Shin B.-S."/>
            <person name="Soldo B."/>
            <person name="Sorokin A."/>
            <person name="Tacconi E."/>
            <person name="Takagi T."/>
            <person name="Takahashi H."/>
            <person name="Takemaru K."/>
            <person name="Takeuchi M."/>
            <person name="Tamakoshi A."/>
            <person name="Tanaka T."/>
            <person name="Terpstra P."/>
            <person name="Tognoni A."/>
            <person name="Tosato V."/>
            <person name="Uchiyama S."/>
            <person name="Vandenbol M."/>
            <person name="Vannier F."/>
            <person name="Vassarotti A."/>
            <person name="Viari A."/>
            <person name="Wambutt R."/>
            <person name="Wedler E."/>
            <person name="Wedler H."/>
            <person name="Weitzenegger T."/>
            <person name="Winters P."/>
            <person name="Wipat A."/>
            <person name="Yamamoto H."/>
            <person name="Yamane K."/>
            <person name="Yasumoto K."/>
            <person name="Yata K."/>
            <person name="Yoshida K."/>
            <person name="Yoshikawa H.-F."/>
            <person name="Zumstein E."/>
            <person name="Yoshikawa H."/>
            <person name="Danchin A."/>
        </authorList>
    </citation>
    <scope>NUCLEOTIDE SEQUENCE [LARGE SCALE GENOMIC DNA]</scope>
    <source>
        <strain>168</strain>
    </source>
</reference>
<dbReference type="EC" id="2.1.2.11" evidence="1"/>
<dbReference type="EMBL" id="L47709">
    <property type="protein sequence ID" value="AAB38448.1"/>
    <property type="molecule type" value="Genomic_DNA"/>
</dbReference>
<dbReference type="EMBL" id="AL009126">
    <property type="protein sequence ID" value="CAB14159.1"/>
    <property type="molecule type" value="Genomic_DNA"/>
</dbReference>
<dbReference type="PIR" id="G69671">
    <property type="entry name" value="G69671"/>
</dbReference>
<dbReference type="RefSeq" id="NP_390124.1">
    <property type="nucleotide sequence ID" value="NC_000964.3"/>
</dbReference>
<dbReference type="RefSeq" id="WP_003230652.1">
    <property type="nucleotide sequence ID" value="NZ_OZ025638.1"/>
</dbReference>
<dbReference type="SMR" id="P52996"/>
<dbReference type="FunCoup" id="P52996">
    <property type="interactions" value="556"/>
</dbReference>
<dbReference type="STRING" id="224308.BSU22430"/>
<dbReference type="jPOST" id="P52996"/>
<dbReference type="PaxDb" id="224308-BSU22430"/>
<dbReference type="EnsemblBacteria" id="CAB14159">
    <property type="protein sequence ID" value="CAB14159"/>
    <property type="gene ID" value="BSU_22430"/>
</dbReference>
<dbReference type="GeneID" id="939032"/>
<dbReference type="KEGG" id="bsu:BSU22430"/>
<dbReference type="eggNOG" id="COG0413">
    <property type="taxonomic scope" value="Bacteria"/>
</dbReference>
<dbReference type="InParanoid" id="P52996"/>
<dbReference type="OrthoDB" id="9781789at2"/>
<dbReference type="PhylomeDB" id="P52996"/>
<dbReference type="BioCyc" id="BSUB:BSU22430-MONOMER"/>
<dbReference type="UniPathway" id="UPA00028">
    <property type="reaction ID" value="UER00003"/>
</dbReference>
<dbReference type="Proteomes" id="UP000001570">
    <property type="component" value="Chromosome"/>
</dbReference>
<dbReference type="GO" id="GO:0005737">
    <property type="term" value="C:cytoplasm"/>
    <property type="evidence" value="ECO:0000318"/>
    <property type="project" value="GO_Central"/>
</dbReference>
<dbReference type="GO" id="GO:0003864">
    <property type="term" value="F:3-methyl-2-oxobutanoate hydroxymethyltransferase activity"/>
    <property type="evidence" value="ECO:0000318"/>
    <property type="project" value="GO_Central"/>
</dbReference>
<dbReference type="GO" id="GO:0000287">
    <property type="term" value="F:magnesium ion binding"/>
    <property type="evidence" value="ECO:0000318"/>
    <property type="project" value="GO_Central"/>
</dbReference>
<dbReference type="GO" id="GO:0015940">
    <property type="term" value="P:pantothenate biosynthetic process"/>
    <property type="evidence" value="ECO:0000318"/>
    <property type="project" value="GO_Central"/>
</dbReference>
<dbReference type="CDD" id="cd06557">
    <property type="entry name" value="KPHMT-like"/>
    <property type="match status" value="1"/>
</dbReference>
<dbReference type="FunFam" id="3.20.20.60:FF:000003">
    <property type="entry name" value="3-methyl-2-oxobutanoate hydroxymethyltransferase"/>
    <property type="match status" value="1"/>
</dbReference>
<dbReference type="Gene3D" id="3.20.20.60">
    <property type="entry name" value="Phosphoenolpyruvate-binding domains"/>
    <property type="match status" value="1"/>
</dbReference>
<dbReference type="HAMAP" id="MF_00156">
    <property type="entry name" value="PanB"/>
    <property type="match status" value="1"/>
</dbReference>
<dbReference type="InterPro" id="IPR003700">
    <property type="entry name" value="Pantoate_hydroxy_MeTrfase"/>
</dbReference>
<dbReference type="InterPro" id="IPR015813">
    <property type="entry name" value="Pyrv/PenolPyrv_kinase-like_dom"/>
</dbReference>
<dbReference type="InterPro" id="IPR040442">
    <property type="entry name" value="Pyrv_kinase-like_dom_sf"/>
</dbReference>
<dbReference type="NCBIfam" id="TIGR00222">
    <property type="entry name" value="panB"/>
    <property type="match status" value="1"/>
</dbReference>
<dbReference type="NCBIfam" id="NF001452">
    <property type="entry name" value="PRK00311.1"/>
    <property type="match status" value="1"/>
</dbReference>
<dbReference type="PANTHER" id="PTHR20881">
    <property type="entry name" value="3-METHYL-2-OXOBUTANOATE HYDROXYMETHYLTRANSFERASE"/>
    <property type="match status" value="1"/>
</dbReference>
<dbReference type="PANTHER" id="PTHR20881:SF0">
    <property type="entry name" value="3-METHYL-2-OXOBUTANOATE HYDROXYMETHYLTRANSFERASE"/>
    <property type="match status" value="1"/>
</dbReference>
<dbReference type="Pfam" id="PF02548">
    <property type="entry name" value="Pantoate_transf"/>
    <property type="match status" value="1"/>
</dbReference>
<dbReference type="PIRSF" id="PIRSF000388">
    <property type="entry name" value="Pantoate_hydroxy_MeTrfase"/>
    <property type="match status" value="1"/>
</dbReference>
<dbReference type="SUPFAM" id="SSF51621">
    <property type="entry name" value="Phosphoenolpyruvate/pyruvate domain"/>
    <property type="match status" value="1"/>
</dbReference>
<name>PANB_BACSU</name>
<keyword id="KW-0963">Cytoplasm</keyword>
<keyword id="KW-0460">Magnesium</keyword>
<keyword id="KW-0479">Metal-binding</keyword>
<keyword id="KW-0566">Pantothenate biosynthesis</keyword>
<keyword id="KW-1185">Reference proteome</keyword>
<keyword id="KW-0808">Transferase</keyword>
<gene>
    <name evidence="1" type="primary">panB</name>
    <name type="ordered locus">BSU22430</name>
</gene>
<feature type="chain" id="PRO_0000184816" description="3-methyl-2-oxobutanoate hydroxymethyltransferase">
    <location>
        <begin position="1"/>
        <end position="277"/>
    </location>
</feature>
<feature type="active site" description="Proton acceptor" evidence="1">
    <location>
        <position position="181"/>
    </location>
</feature>
<feature type="binding site" evidence="1">
    <location>
        <begin position="43"/>
        <end position="44"/>
    </location>
    <ligand>
        <name>3-methyl-2-oxobutanoate</name>
        <dbReference type="ChEBI" id="CHEBI:11851"/>
    </ligand>
</feature>
<feature type="binding site" evidence="1">
    <location>
        <position position="43"/>
    </location>
    <ligand>
        <name>Mg(2+)</name>
        <dbReference type="ChEBI" id="CHEBI:18420"/>
    </ligand>
</feature>
<feature type="binding site" evidence="1">
    <location>
        <position position="82"/>
    </location>
    <ligand>
        <name>3-methyl-2-oxobutanoate</name>
        <dbReference type="ChEBI" id="CHEBI:11851"/>
    </ligand>
</feature>
<feature type="binding site" evidence="1">
    <location>
        <position position="82"/>
    </location>
    <ligand>
        <name>Mg(2+)</name>
        <dbReference type="ChEBI" id="CHEBI:18420"/>
    </ligand>
</feature>
<feature type="binding site" evidence="1">
    <location>
        <position position="112"/>
    </location>
    <ligand>
        <name>3-methyl-2-oxobutanoate</name>
        <dbReference type="ChEBI" id="CHEBI:11851"/>
    </ligand>
</feature>
<feature type="binding site" evidence="1">
    <location>
        <position position="114"/>
    </location>
    <ligand>
        <name>Mg(2+)</name>
        <dbReference type="ChEBI" id="CHEBI:18420"/>
    </ligand>
</feature>
<sequence length="277" mass="29758">MKTKLDFLKMKESEEPIVMLTAYDYPAAKLAEQAGVDMILVGDSLGMVVLGLDSTVGVTVADMIHHTKAVKRGAPNTFIVTDMPFMSYHLSKEDTLKNAAAIVQESGADALKLEGGEGVFESIRALTLGGIPVVSHLGLTPQSVGVLGGYKVQGKDEQSAKKLIEDSIKCEEAGAMMLVLECVPAELTAKIAETLSIPVIGIGAGVKADGQVLVYHDIIGHGVERTPKFVKQYTRIDETIETAISGYVQDVRHRAFPEQKHSFQMNQTVLDGLYGGK</sequence>